<feature type="initiator methionine" description="Removed" evidence="1">
    <location>
        <position position="1"/>
    </location>
</feature>
<feature type="chain" id="PRO_0000097008" description="Feather beta keratin">
    <location>
        <begin position="2"/>
        <end position="98"/>
    </location>
</feature>
<feature type="modified residue" description="N-acetylserine" evidence="1">
    <location>
        <position position="2"/>
    </location>
</feature>
<reference key="1">
    <citation type="submission" date="2000-09" db="EMBL/GenBank/DDBJ databases">
        <title>Feather beta keratin in the developing avian scale.</title>
        <authorList>
            <person name="Sawyer R.H."/>
            <person name="Salvatore B.A."/>
            <person name="Knapp L."/>
            <person name="Potylick T.-T.F."/>
            <person name="French J.O."/>
            <person name="Glenn T.C."/>
        </authorList>
    </citation>
    <scope>NUCLEOTIDE SEQUENCE [GENOMIC DNA]</scope>
</reference>
<accession>Q98U05</accession>
<protein>
    <recommendedName>
        <fullName>Feather beta keratin</fullName>
        <shortName>F-ker</shortName>
    </recommendedName>
</protein>
<keyword id="KW-0007">Acetylation</keyword>
<keyword id="KW-0416">Keratin</keyword>
<proteinExistence type="inferred from homology"/>
<organism>
    <name type="scientific">Mycteria americana</name>
    <name type="common">Wood stork</name>
    <dbReference type="NCBI Taxonomy" id="33587"/>
    <lineage>
        <taxon>Eukaryota</taxon>
        <taxon>Metazoa</taxon>
        <taxon>Chordata</taxon>
        <taxon>Craniata</taxon>
        <taxon>Vertebrata</taxon>
        <taxon>Euteleostomi</taxon>
        <taxon>Archelosauria</taxon>
        <taxon>Archosauria</taxon>
        <taxon>Dinosauria</taxon>
        <taxon>Saurischia</taxon>
        <taxon>Theropoda</taxon>
        <taxon>Coelurosauria</taxon>
        <taxon>Aves</taxon>
        <taxon>Neognathae</taxon>
        <taxon>Neoaves</taxon>
        <taxon>Aequornithes</taxon>
        <taxon>Ciconiiformes</taxon>
        <taxon>Ciconiidae</taxon>
        <taxon>Mycteria</taxon>
    </lineage>
</organism>
<dbReference type="EMBL" id="AF308827">
    <property type="protein sequence ID" value="AAG59865.1"/>
    <property type="molecule type" value="Genomic_DNA"/>
</dbReference>
<dbReference type="GO" id="GO:0005882">
    <property type="term" value="C:intermediate filament"/>
    <property type="evidence" value="ECO:0007669"/>
    <property type="project" value="UniProtKB-KW"/>
</dbReference>
<dbReference type="GO" id="GO:0005200">
    <property type="term" value="F:structural constituent of cytoskeleton"/>
    <property type="evidence" value="ECO:0007669"/>
    <property type="project" value="InterPro"/>
</dbReference>
<dbReference type="InterPro" id="IPR003461">
    <property type="entry name" value="Keratin"/>
</dbReference>
<dbReference type="PANTHER" id="PTHR31203">
    <property type="entry name" value="BETA-KERATIN-RELATED PROTEIN-RELATED"/>
    <property type="match status" value="1"/>
</dbReference>
<dbReference type="PANTHER" id="PTHR31203:SF1">
    <property type="entry name" value="BETA-KERATIN-RELATED PROTEIN-RELATED"/>
    <property type="match status" value="1"/>
</dbReference>
<dbReference type="Pfam" id="PF02422">
    <property type="entry name" value="Keratin"/>
    <property type="match status" value="1"/>
</dbReference>
<name>KRFB_MYCAM</name>
<comment type="subunit">
    <text>The avian keratins (F-ker, S-ker, C-ker and B-ker) are a complex mixture of very similar polypeptides.</text>
</comment>
<comment type="similarity">
    <text evidence="2">Belongs to the avian keratin family.</text>
</comment>
<evidence type="ECO:0000250" key="1"/>
<evidence type="ECO:0000305" key="2"/>
<sequence length="98" mass="10003">MSCYDLCRPCGPTPLANSCNEPCVRQCQDSRVIIEPSPVVVTLPGPILSSFPQNTAVGSTTSAAVGSILSAEGVPISSGGFSLSGLGGRYSGRRCLPC</sequence>